<dbReference type="EC" id="2.7.7.6" evidence="1"/>
<dbReference type="EMBL" id="BX640423">
    <property type="protein sequence ID" value="CAE39755.1"/>
    <property type="status" value="ALT_INIT"/>
    <property type="molecule type" value="Genomic_DNA"/>
</dbReference>
<dbReference type="RefSeq" id="WP_041937066.1">
    <property type="nucleotide sequence ID" value="NC_002928.3"/>
</dbReference>
<dbReference type="SMR" id="Q7W2G9"/>
<dbReference type="GeneID" id="93206243"/>
<dbReference type="KEGG" id="bpa:BPP0014"/>
<dbReference type="HOGENOM" id="CLU_000524_4_3_4"/>
<dbReference type="Proteomes" id="UP000001421">
    <property type="component" value="Chromosome"/>
</dbReference>
<dbReference type="GO" id="GO:0000428">
    <property type="term" value="C:DNA-directed RNA polymerase complex"/>
    <property type="evidence" value="ECO:0007669"/>
    <property type="project" value="UniProtKB-KW"/>
</dbReference>
<dbReference type="GO" id="GO:0003677">
    <property type="term" value="F:DNA binding"/>
    <property type="evidence" value="ECO:0007669"/>
    <property type="project" value="UniProtKB-UniRule"/>
</dbReference>
<dbReference type="GO" id="GO:0003899">
    <property type="term" value="F:DNA-directed RNA polymerase activity"/>
    <property type="evidence" value="ECO:0007669"/>
    <property type="project" value="UniProtKB-UniRule"/>
</dbReference>
<dbReference type="GO" id="GO:0032549">
    <property type="term" value="F:ribonucleoside binding"/>
    <property type="evidence" value="ECO:0007669"/>
    <property type="project" value="InterPro"/>
</dbReference>
<dbReference type="GO" id="GO:0006351">
    <property type="term" value="P:DNA-templated transcription"/>
    <property type="evidence" value="ECO:0007669"/>
    <property type="project" value="UniProtKB-UniRule"/>
</dbReference>
<dbReference type="CDD" id="cd00653">
    <property type="entry name" value="RNA_pol_B_RPB2"/>
    <property type="match status" value="1"/>
</dbReference>
<dbReference type="FunFam" id="2.40.50.100:FF:000006">
    <property type="entry name" value="DNA-directed RNA polymerase subunit beta"/>
    <property type="match status" value="1"/>
</dbReference>
<dbReference type="FunFam" id="3.90.1800.10:FF:000001">
    <property type="entry name" value="DNA-directed RNA polymerase subunit beta"/>
    <property type="match status" value="1"/>
</dbReference>
<dbReference type="Gene3D" id="2.40.50.100">
    <property type="match status" value="1"/>
</dbReference>
<dbReference type="Gene3D" id="2.40.50.150">
    <property type="match status" value="1"/>
</dbReference>
<dbReference type="Gene3D" id="3.90.1100.10">
    <property type="match status" value="2"/>
</dbReference>
<dbReference type="Gene3D" id="2.30.150.10">
    <property type="entry name" value="DNA-directed RNA polymerase, beta subunit, external 1 domain"/>
    <property type="match status" value="1"/>
</dbReference>
<dbReference type="Gene3D" id="2.40.270.10">
    <property type="entry name" value="DNA-directed RNA polymerase, subunit 2, domain 6"/>
    <property type="match status" value="2"/>
</dbReference>
<dbReference type="Gene3D" id="3.90.1800.10">
    <property type="entry name" value="RNA polymerase alpha subunit dimerisation domain"/>
    <property type="match status" value="1"/>
</dbReference>
<dbReference type="Gene3D" id="3.90.1110.10">
    <property type="entry name" value="RNA polymerase Rpb2, domain 2"/>
    <property type="match status" value="2"/>
</dbReference>
<dbReference type="HAMAP" id="MF_01321">
    <property type="entry name" value="RNApol_bact_RpoB"/>
    <property type="match status" value="1"/>
</dbReference>
<dbReference type="InterPro" id="IPR042107">
    <property type="entry name" value="DNA-dir_RNA_pol_bsu_ext_1_sf"/>
</dbReference>
<dbReference type="InterPro" id="IPR019462">
    <property type="entry name" value="DNA-dir_RNA_pol_bsu_external_1"/>
</dbReference>
<dbReference type="InterPro" id="IPR015712">
    <property type="entry name" value="DNA-dir_RNA_pol_su2"/>
</dbReference>
<dbReference type="InterPro" id="IPR007120">
    <property type="entry name" value="DNA-dir_RNAP_su2_dom"/>
</dbReference>
<dbReference type="InterPro" id="IPR037033">
    <property type="entry name" value="DNA-dir_RNAP_su2_hyb_sf"/>
</dbReference>
<dbReference type="InterPro" id="IPR010243">
    <property type="entry name" value="RNA_pol_bsu_bac"/>
</dbReference>
<dbReference type="InterPro" id="IPR007121">
    <property type="entry name" value="RNA_pol_bsu_CS"/>
</dbReference>
<dbReference type="InterPro" id="IPR007644">
    <property type="entry name" value="RNA_pol_bsu_protrusion"/>
</dbReference>
<dbReference type="InterPro" id="IPR007642">
    <property type="entry name" value="RNA_pol_Rpb2_2"/>
</dbReference>
<dbReference type="InterPro" id="IPR037034">
    <property type="entry name" value="RNA_pol_Rpb2_2_sf"/>
</dbReference>
<dbReference type="InterPro" id="IPR007645">
    <property type="entry name" value="RNA_pol_Rpb2_3"/>
</dbReference>
<dbReference type="InterPro" id="IPR007641">
    <property type="entry name" value="RNA_pol_Rpb2_7"/>
</dbReference>
<dbReference type="InterPro" id="IPR014724">
    <property type="entry name" value="RNA_pol_RPB2_OB-fold"/>
</dbReference>
<dbReference type="NCBIfam" id="NF001616">
    <property type="entry name" value="PRK00405.1"/>
    <property type="match status" value="1"/>
</dbReference>
<dbReference type="NCBIfam" id="TIGR02013">
    <property type="entry name" value="rpoB"/>
    <property type="match status" value="1"/>
</dbReference>
<dbReference type="PANTHER" id="PTHR20856">
    <property type="entry name" value="DNA-DIRECTED RNA POLYMERASE I SUBUNIT 2"/>
    <property type="match status" value="1"/>
</dbReference>
<dbReference type="Pfam" id="PF04563">
    <property type="entry name" value="RNA_pol_Rpb2_1"/>
    <property type="match status" value="1"/>
</dbReference>
<dbReference type="Pfam" id="PF04561">
    <property type="entry name" value="RNA_pol_Rpb2_2"/>
    <property type="match status" value="2"/>
</dbReference>
<dbReference type="Pfam" id="PF04565">
    <property type="entry name" value="RNA_pol_Rpb2_3"/>
    <property type="match status" value="1"/>
</dbReference>
<dbReference type="Pfam" id="PF10385">
    <property type="entry name" value="RNA_pol_Rpb2_45"/>
    <property type="match status" value="1"/>
</dbReference>
<dbReference type="Pfam" id="PF00562">
    <property type="entry name" value="RNA_pol_Rpb2_6"/>
    <property type="match status" value="1"/>
</dbReference>
<dbReference type="Pfam" id="PF04560">
    <property type="entry name" value="RNA_pol_Rpb2_7"/>
    <property type="match status" value="1"/>
</dbReference>
<dbReference type="SUPFAM" id="SSF64484">
    <property type="entry name" value="beta and beta-prime subunits of DNA dependent RNA-polymerase"/>
    <property type="match status" value="1"/>
</dbReference>
<dbReference type="PROSITE" id="PS01166">
    <property type="entry name" value="RNA_POL_BETA"/>
    <property type="match status" value="1"/>
</dbReference>
<sequence length="1370" mass="153083">MPYSYTEKKRIRKSFAKREDVQNVPFLLATQLQSYLTFLQADTATSDRVNEGLQAAFSSIFPIVSHNGMARLEFVSYALGEPVFDVKECQQRGLTYASPLRAKVRLVLLDREVSKPTIKEVKEQEVYMGEIPLMTGTGSFVINGTERVIVSQLHRSPGVFFEHDRGKTHSSGKLLFSARVIPYRGSWLDFEFDPKDVLFFRVDRRRKMPVTILLKAIGMTPESILAHFFDFDNFELKSEGGMMEFVAERWKGEMARFDIADRDGKVIVEKDKRINAKHLRDLAAGGIQRVSVPEDFLYGRVLAKNIVDPDTGEVVAHANDEITESVLNAMRAANVRDIQTLYTNDLDRGPYISQTLRADETADQMAARVAIYRMMRPGEPPAEEAVEALFQRLFYSEETYDLSRVGRMKVNSRLGRGDDSTGPMTLTNEDILETIKVLVELRNGRGQIDDIDHLGNRRVRCVGELAENQFRAGLVRVERAVKERLGQAETENLMPHDLINSKPISAAIKEFFGSSQLSQFMDQTNPLSEITHKRRVSALGPGGLTRERAGFEVRDVHPTHYGRVCPIETPEGPNIGLINSMALYARLNEYGFLETPYRKIIDGKVSDQIDYLSAIEESHYVIAQANAALDDEGRFVDDLVACREAGETMLTAPGNVHYMDVAPSQIVSVAASLIPFLEHDDANRALMGANMQRQAVPCLRPEKPLVGTGVERTVAVDSGTTVQALRGGVVDHVDADRVVIRVNDEENVAGEVGVDIYNLIKYTRSNQNTNINQRPIVARGDKVAKGDVLADGASTDLGELALGQNMLIAFMPWNGYNFEDSILISERVVADDRYTSIHIEELTVVARDTKLGPEEITRDISNLAETQLNRLDDSGIVYIGAEVSADDVLVGKVTPKGETQLTPEEKLLRAIFGEKASDVKDTSLRVSSGMTGTVIDVQVFTREGIVRDKRAQSIIDDELRRYRQDLNDQLRIVENDQFDRIEKMLVGKAVNGGPRKLAKGATLTKAYLADLDRWQWFDIRLADEQHAVVLEQAKESLEQKRHQFDLAFEEKRKKLTQGDELPPGVLKMIKVYLAVKRRLQPGDKMAGRHGNKGVVSRITPVEDMPHMADGTPADIVLNPLGVPSRMNVGQVLEVHLGWAAKGVGYRIADMLRDERTAQAKSVRGYLEKVYNTTGSSAHIDSLTDEEVLELANNLKKGVPFATPVFDGATEEEIGKMLELAYPDDVAARMRLTASRSQAWLYDGRTGEQFERPVTIGYMHYLKLHHLVDDKMHARSTGPYSLVTQQPLGGKAQFGGQRFGEMEVWALEAYGASYTLQEMLTVKSDDITGRTKVYENIVKGDHVIDAGMPESFNVLVKEIRSLALDMDLERN</sequence>
<name>RPOB_BORPA</name>
<accession>Q7W2G9</accession>
<feature type="chain" id="PRO_0000047868" description="DNA-directed RNA polymerase subunit beta">
    <location>
        <begin position="1"/>
        <end position="1370"/>
    </location>
</feature>
<keyword id="KW-0240">DNA-directed RNA polymerase</keyword>
<keyword id="KW-0548">Nucleotidyltransferase</keyword>
<keyword id="KW-0804">Transcription</keyword>
<keyword id="KW-0808">Transferase</keyword>
<gene>
    <name evidence="1" type="primary">rpoB</name>
    <name type="ordered locus">BPP0014</name>
</gene>
<protein>
    <recommendedName>
        <fullName evidence="1">DNA-directed RNA polymerase subunit beta</fullName>
        <shortName evidence="1">RNAP subunit beta</shortName>
        <ecNumber evidence="1">2.7.7.6</ecNumber>
    </recommendedName>
    <alternativeName>
        <fullName evidence="1">RNA polymerase subunit beta</fullName>
    </alternativeName>
    <alternativeName>
        <fullName evidence="1">Transcriptase subunit beta</fullName>
    </alternativeName>
</protein>
<reference key="1">
    <citation type="journal article" date="2003" name="Nat. Genet.">
        <title>Comparative analysis of the genome sequences of Bordetella pertussis, Bordetella parapertussis and Bordetella bronchiseptica.</title>
        <authorList>
            <person name="Parkhill J."/>
            <person name="Sebaihia M."/>
            <person name="Preston A."/>
            <person name="Murphy L.D."/>
            <person name="Thomson N.R."/>
            <person name="Harris D.E."/>
            <person name="Holden M.T.G."/>
            <person name="Churcher C.M."/>
            <person name="Bentley S.D."/>
            <person name="Mungall K.L."/>
            <person name="Cerdeno-Tarraga A.-M."/>
            <person name="Temple L."/>
            <person name="James K.D."/>
            <person name="Harris B."/>
            <person name="Quail M.A."/>
            <person name="Achtman M."/>
            <person name="Atkin R."/>
            <person name="Baker S."/>
            <person name="Basham D."/>
            <person name="Bason N."/>
            <person name="Cherevach I."/>
            <person name="Chillingworth T."/>
            <person name="Collins M."/>
            <person name="Cronin A."/>
            <person name="Davis P."/>
            <person name="Doggett J."/>
            <person name="Feltwell T."/>
            <person name="Goble A."/>
            <person name="Hamlin N."/>
            <person name="Hauser H."/>
            <person name="Holroyd S."/>
            <person name="Jagels K."/>
            <person name="Leather S."/>
            <person name="Moule S."/>
            <person name="Norberczak H."/>
            <person name="O'Neil S."/>
            <person name="Ormond D."/>
            <person name="Price C."/>
            <person name="Rabbinowitsch E."/>
            <person name="Rutter S."/>
            <person name="Sanders M."/>
            <person name="Saunders D."/>
            <person name="Seeger K."/>
            <person name="Sharp S."/>
            <person name="Simmonds M."/>
            <person name="Skelton J."/>
            <person name="Squares R."/>
            <person name="Squares S."/>
            <person name="Stevens K."/>
            <person name="Unwin L."/>
            <person name="Whitehead S."/>
            <person name="Barrell B.G."/>
            <person name="Maskell D.J."/>
        </authorList>
    </citation>
    <scope>NUCLEOTIDE SEQUENCE [LARGE SCALE GENOMIC DNA]</scope>
    <source>
        <strain>12822 / ATCC BAA-587 / NCTC 13253</strain>
    </source>
</reference>
<organism>
    <name type="scientific">Bordetella parapertussis (strain 12822 / ATCC BAA-587 / NCTC 13253)</name>
    <dbReference type="NCBI Taxonomy" id="257311"/>
    <lineage>
        <taxon>Bacteria</taxon>
        <taxon>Pseudomonadati</taxon>
        <taxon>Pseudomonadota</taxon>
        <taxon>Betaproteobacteria</taxon>
        <taxon>Burkholderiales</taxon>
        <taxon>Alcaligenaceae</taxon>
        <taxon>Bordetella</taxon>
    </lineage>
</organism>
<proteinExistence type="inferred from homology"/>
<evidence type="ECO:0000255" key="1">
    <source>
        <dbReference type="HAMAP-Rule" id="MF_01321"/>
    </source>
</evidence>
<evidence type="ECO:0000305" key="2"/>
<comment type="function">
    <text evidence="1">DNA-dependent RNA polymerase catalyzes the transcription of DNA into RNA using the four ribonucleoside triphosphates as substrates.</text>
</comment>
<comment type="catalytic activity">
    <reaction evidence="1">
        <text>RNA(n) + a ribonucleoside 5'-triphosphate = RNA(n+1) + diphosphate</text>
        <dbReference type="Rhea" id="RHEA:21248"/>
        <dbReference type="Rhea" id="RHEA-COMP:14527"/>
        <dbReference type="Rhea" id="RHEA-COMP:17342"/>
        <dbReference type="ChEBI" id="CHEBI:33019"/>
        <dbReference type="ChEBI" id="CHEBI:61557"/>
        <dbReference type="ChEBI" id="CHEBI:140395"/>
        <dbReference type="EC" id="2.7.7.6"/>
    </reaction>
</comment>
<comment type="subunit">
    <text evidence="1">The RNAP catalytic core consists of 2 alpha, 1 beta, 1 beta' and 1 omega subunit. When a sigma factor is associated with the core the holoenzyme is formed, which can initiate transcription.</text>
</comment>
<comment type="similarity">
    <text evidence="1">Belongs to the RNA polymerase beta chain family.</text>
</comment>
<comment type="sequence caution" evidence="2">
    <conflict type="erroneous initiation">
        <sequence resource="EMBL-CDS" id="CAE39755"/>
    </conflict>
</comment>